<protein>
    <recommendedName>
        <fullName evidence="1">Acetyl-coenzyme A synthetase</fullName>
        <shortName evidence="1">AcCoA synthetase</shortName>
        <shortName evidence="1">Acs</shortName>
        <ecNumber evidence="1">6.2.1.1</ecNumber>
    </recommendedName>
    <alternativeName>
        <fullName evidence="1">Acetate--CoA ligase</fullName>
    </alternativeName>
    <alternativeName>
        <fullName evidence="1">Acyl-activating enzyme</fullName>
    </alternativeName>
</protein>
<dbReference type="EC" id="6.2.1.1" evidence="1"/>
<dbReference type="EMBL" id="AE014291">
    <property type="protein sequence ID" value="AAN30706.1"/>
    <property type="molecule type" value="Genomic_DNA"/>
</dbReference>
<dbReference type="EMBL" id="CP002997">
    <property type="protein sequence ID" value="AEM19123.1"/>
    <property type="molecule type" value="Genomic_DNA"/>
</dbReference>
<dbReference type="SMR" id="Q8FYQ3"/>
<dbReference type="KEGG" id="bms:BR1811"/>
<dbReference type="KEGG" id="bsi:BS1330_I1805"/>
<dbReference type="PATRIC" id="fig|204722.22.peg.48"/>
<dbReference type="HOGENOM" id="CLU_000022_3_6_5"/>
<dbReference type="Proteomes" id="UP000007104">
    <property type="component" value="Chromosome I"/>
</dbReference>
<dbReference type="GO" id="GO:0005829">
    <property type="term" value="C:cytosol"/>
    <property type="evidence" value="ECO:0007669"/>
    <property type="project" value="TreeGrafter"/>
</dbReference>
<dbReference type="GO" id="GO:0003987">
    <property type="term" value="F:acetate-CoA ligase activity"/>
    <property type="evidence" value="ECO:0007669"/>
    <property type="project" value="UniProtKB-UniRule"/>
</dbReference>
<dbReference type="GO" id="GO:0016208">
    <property type="term" value="F:AMP binding"/>
    <property type="evidence" value="ECO:0007669"/>
    <property type="project" value="InterPro"/>
</dbReference>
<dbReference type="GO" id="GO:0005524">
    <property type="term" value="F:ATP binding"/>
    <property type="evidence" value="ECO:0007669"/>
    <property type="project" value="UniProtKB-KW"/>
</dbReference>
<dbReference type="GO" id="GO:0046872">
    <property type="term" value="F:metal ion binding"/>
    <property type="evidence" value="ECO:0007669"/>
    <property type="project" value="UniProtKB-KW"/>
</dbReference>
<dbReference type="GO" id="GO:0019427">
    <property type="term" value="P:acetyl-CoA biosynthetic process from acetate"/>
    <property type="evidence" value="ECO:0007669"/>
    <property type="project" value="InterPro"/>
</dbReference>
<dbReference type="CDD" id="cd05966">
    <property type="entry name" value="ACS"/>
    <property type="match status" value="1"/>
</dbReference>
<dbReference type="FunFam" id="3.30.300.30:FF:000004">
    <property type="entry name" value="Acetyl-coenzyme A synthetase"/>
    <property type="match status" value="1"/>
</dbReference>
<dbReference type="FunFam" id="3.40.50.12780:FF:000001">
    <property type="entry name" value="Acetyl-coenzyme A synthetase"/>
    <property type="match status" value="1"/>
</dbReference>
<dbReference type="Gene3D" id="3.30.300.30">
    <property type="match status" value="1"/>
</dbReference>
<dbReference type="Gene3D" id="3.40.50.12780">
    <property type="entry name" value="N-terminal domain of ligase-like"/>
    <property type="match status" value="1"/>
</dbReference>
<dbReference type="HAMAP" id="MF_01123">
    <property type="entry name" value="Ac_CoA_synth"/>
    <property type="match status" value="1"/>
</dbReference>
<dbReference type="InterPro" id="IPR011904">
    <property type="entry name" value="Ac_CoA_lig"/>
</dbReference>
<dbReference type="InterPro" id="IPR032387">
    <property type="entry name" value="ACAS_N"/>
</dbReference>
<dbReference type="InterPro" id="IPR025110">
    <property type="entry name" value="AMP-bd_C"/>
</dbReference>
<dbReference type="InterPro" id="IPR045851">
    <property type="entry name" value="AMP-bd_C_sf"/>
</dbReference>
<dbReference type="InterPro" id="IPR020845">
    <property type="entry name" value="AMP-binding_CS"/>
</dbReference>
<dbReference type="InterPro" id="IPR000873">
    <property type="entry name" value="AMP-dep_synth/lig_dom"/>
</dbReference>
<dbReference type="InterPro" id="IPR042099">
    <property type="entry name" value="ANL_N_sf"/>
</dbReference>
<dbReference type="NCBIfam" id="TIGR02188">
    <property type="entry name" value="Ac_CoA_lig_AcsA"/>
    <property type="match status" value="1"/>
</dbReference>
<dbReference type="NCBIfam" id="NF001208">
    <property type="entry name" value="PRK00174.1"/>
    <property type="match status" value="1"/>
</dbReference>
<dbReference type="PANTHER" id="PTHR24095">
    <property type="entry name" value="ACETYL-COENZYME A SYNTHETASE"/>
    <property type="match status" value="1"/>
</dbReference>
<dbReference type="PANTHER" id="PTHR24095:SF14">
    <property type="entry name" value="ACETYL-COENZYME A SYNTHETASE 1"/>
    <property type="match status" value="1"/>
</dbReference>
<dbReference type="Pfam" id="PF16177">
    <property type="entry name" value="ACAS_N"/>
    <property type="match status" value="1"/>
</dbReference>
<dbReference type="Pfam" id="PF00501">
    <property type="entry name" value="AMP-binding"/>
    <property type="match status" value="1"/>
</dbReference>
<dbReference type="Pfam" id="PF13193">
    <property type="entry name" value="AMP-binding_C"/>
    <property type="match status" value="1"/>
</dbReference>
<dbReference type="SUPFAM" id="SSF56801">
    <property type="entry name" value="Acetyl-CoA synthetase-like"/>
    <property type="match status" value="1"/>
</dbReference>
<dbReference type="PROSITE" id="PS00455">
    <property type="entry name" value="AMP_BINDING"/>
    <property type="match status" value="1"/>
</dbReference>
<evidence type="ECO:0000255" key="1">
    <source>
        <dbReference type="HAMAP-Rule" id="MF_01123"/>
    </source>
</evidence>
<organism>
    <name type="scientific">Brucella suis biovar 1 (strain 1330)</name>
    <dbReference type="NCBI Taxonomy" id="204722"/>
    <lineage>
        <taxon>Bacteria</taxon>
        <taxon>Pseudomonadati</taxon>
        <taxon>Pseudomonadota</taxon>
        <taxon>Alphaproteobacteria</taxon>
        <taxon>Hyphomicrobiales</taxon>
        <taxon>Brucellaceae</taxon>
        <taxon>Brucella/Ochrobactrum group</taxon>
        <taxon>Brucella</taxon>
    </lineage>
</organism>
<proteinExistence type="inferred from homology"/>
<gene>
    <name evidence="1" type="primary">acsA</name>
    <name type="ordered locus">BR1811</name>
    <name type="ordered locus">BS1330_I1805</name>
</gene>
<keyword id="KW-0007">Acetylation</keyword>
<keyword id="KW-0067">ATP-binding</keyword>
<keyword id="KW-0436">Ligase</keyword>
<keyword id="KW-0460">Magnesium</keyword>
<keyword id="KW-0479">Metal-binding</keyword>
<keyword id="KW-0547">Nucleotide-binding</keyword>
<comment type="function">
    <text evidence="1">Catalyzes the conversion of acetate into acetyl-CoA (AcCoA), an essential intermediate at the junction of anabolic and catabolic pathways. AcsA undergoes a two-step reaction. In the first half reaction, AcsA combines acetate with ATP to form acetyl-adenylate (AcAMP) intermediate. In the second half reaction, it can then transfer the acetyl group from AcAMP to the sulfhydryl group of CoA, forming the product AcCoA.</text>
</comment>
<comment type="catalytic activity">
    <reaction evidence="1">
        <text>acetate + ATP + CoA = acetyl-CoA + AMP + diphosphate</text>
        <dbReference type="Rhea" id="RHEA:23176"/>
        <dbReference type="ChEBI" id="CHEBI:30089"/>
        <dbReference type="ChEBI" id="CHEBI:30616"/>
        <dbReference type="ChEBI" id="CHEBI:33019"/>
        <dbReference type="ChEBI" id="CHEBI:57287"/>
        <dbReference type="ChEBI" id="CHEBI:57288"/>
        <dbReference type="ChEBI" id="CHEBI:456215"/>
        <dbReference type="EC" id="6.2.1.1"/>
    </reaction>
</comment>
<comment type="cofactor">
    <cofactor evidence="1">
        <name>Mg(2+)</name>
        <dbReference type="ChEBI" id="CHEBI:18420"/>
    </cofactor>
</comment>
<comment type="PTM">
    <text evidence="1">Acetylated. Deacetylation by the SIR2-homolog deacetylase activates the enzyme.</text>
</comment>
<comment type="similarity">
    <text evidence="1">Belongs to the ATP-dependent AMP-binding enzyme family.</text>
</comment>
<feature type="chain" id="PRO_0000208357" description="Acetyl-coenzyme A synthetase">
    <location>
        <begin position="1"/>
        <end position="651"/>
    </location>
</feature>
<feature type="binding site" evidence="1">
    <location>
        <begin position="189"/>
        <end position="192"/>
    </location>
    <ligand>
        <name>CoA</name>
        <dbReference type="ChEBI" id="CHEBI:57287"/>
    </ligand>
</feature>
<feature type="binding site" evidence="1">
    <location>
        <position position="311"/>
    </location>
    <ligand>
        <name>CoA</name>
        <dbReference type="ChEBI" id="CHEBI:57287"/>
    </ligand>
</feature>
<feature type="binding site" evidence="1">
    <location>
        <position position="335"/>
    </location>
    <ligand>
        <name>CoA</name>
        <dbReference type="ChEBI" id="CHEBI:57287"/>
    </ligand>
</feature>
<feature type="binding site" evidence="1">
    <location>
        <begin position="387"/>
        <end position="389"/>
    </location>
    <ligand>
        <name>ATP</name>
        <dbReference type="ChEBI" id="CHEBI:30616"/>
    </ligand>
</feature>
<feature type="binding site" evidence="1">
    <location>
        <begin position="411"/>
        <end position="416"/>
    </location>
    <ligand>
        <name>ATP</name>
        <dbReference type="ChEBI" id="CHEBI:30616"/>
    </ligand>
</feature>
<feature type="binding site" evidence="1">
    <location>
        <position position="500"/>
    </location>
    <ligand>
        <name>ATP</name>
        <dbReference type="ChEBI" id="CHEBI:30616"/>
    </ligand>
</feature>
<feature type="binding site" evidence="1">
    <location>
        <position position="515"/>
    </location>
    <ligand>
        <name>ATP</name>
        <dbReference type="ChEBI" id="CHEBI:30616"/>
    </ligand>
</feature>
<feature type="binding site" evidence="1">
    <location>
        <position position="523"/>
    </location>
    <ligand>
        <name>CoA</name>
        <dbReference type="ChEBI" id="CHEBI:57287"/>
    </ligand>
</feature>
<feature type="binding site" evidence="1">
    <location>
        <position position="526"/>
    </location>
    <ligand>
        <name>ATP</name>
        <dbReference type="ChEBI" id="CHEBI:30616"/>
    </ligand>
</feature>
<feature type="binding site" evidence="1">
    <location>
        <position position="537"/>
    </location>
    <ligand>
        <name>Mg(2+)</name>
        <dbReference type="ChEBI" id="CHEBI:18420"/>
    </ligand>
</feature>
<feature type="binding site" evidence="1">
    <location>
        <position position="539"/>
    </location>
    <ligand>
        <name>Mg(2+)</name>
        <dbReference type="ChEBI" id="CHEBI:18420"/>
    </ligand>
</feature>
<feature type="binding site" evidence="1">
    <location>
        <position position="542"/>
    </location>
    <ligand>
        <name>Mg(2+)</name>
        <dbReference type="ChEBI" id="CHEBI:18420"/>
    </ligand>
</feature>
<feature type="binding site">
    <location>
        <position position="586"/>
    </location>
    <ligand>
        <name>CoA</name>
        <dbReference type="ChEBI" id="CHEBI:57287"/>
    </ligand>
</feature>
<feature type="modified residue" description="N6-acetyllysine" evidence="1">
    <location>
        <position position="611"/>
    </location>
</feature>
<sequence length="651" mass="72731">MSEKLYPVLPEAKKNTLIDNETYLEWYEESVSDPDGFWAKHGRRIDWFKPFTKVKNTDFNGDVTIKWYEDGVTNVSYNCIDRHLKSRGDKVAIIWEGDNPYIDKKITYRELYENVCRMANVLKKHGVKKGDRVTIYLPMIPEAAYAMLACARIGAVHSVVFAGFSPEALAGRIVDCESTFVITADEGVRGGKPVALKENTDTAIDIAAKQYVMVNKVLVVRRTGGKVSWGRGRDLWYHQEVASVEPHCEPEPMNAEDPLFILYTSGSTGKPKGVLHTTGGYLVYASMTHQYVFDYHDGEIYWCTADVGWVTGHSYIVYGPLANGATTLMFEGVPNFPDQGRFWEVVDKHHVNIFYTAPTALRALMGAGDEFVTRSSRSTLRLLGSVGEPINPEAWEWYYNVVGDQKCPIVDTWWQTENGGILITPLPGATDLKPGSATRPFFGVKPVLVDNEGNVQEGVADGNLCISDSWPGQMRTVYGDHKRFIETYFSTYKGMYFSGDGCRRDEDGYYWITGRVDDVLNISGHRLGTAEIESALVSHHSVSEAAVVGYPHPIKGQGIYCYVTLMTGADAQDPDELRKELVQHVRKEIGPIATPDKIQFAPGLPKTRSGKIMRRILRKIAEDEFGALGDTSTLADPGVVDDLIENRQNKK</sequence>
<accession>Q8FYQ3</accession>
<accession>G0K7E7</accession>
<name>ACSA_BRUSU</name>
<reference key="1">
    <citation type="journal article" date="2002" name="Proc. Natl. Acad. Sci. U.S.A.">
        <title>The Brucella suis genome reveals fundamental similarities between animal and plant pathogens and symbionts.</title>
        <authorList>
            <person name="Paulsen I.T."/>
            <person name="Seshadri R."/>
            <person name="Nelson K.E."/>
            <person name="Eisen J.A."/>
            <person name="Heidelberg J.F."/>
            <person name="Read T.D."/>
            <person name="Dodson R.J."/>
            <person name="Umayam L.A."/>
            <person name="Brinkac L.M."/>
            <person name="Beanan M.J."/>
            <person name="Daugherty S.C."/>
            <person name="DeBoy R.T."/>
            <person name="Durkin A.S."/>
            <person name="Kolonay J.F."/>
            <person name="Madupu R."/>
            <person name="Nelson W.C."/>
            <person name="Ayodeji B."/>
            <person name="Kraul M."/>
            <person name="Shetty J."/>
            <person name="Malek J.A."/>
            <person name="Van Aken S.E."/>
            <person name="Riedmuller S."/>
            <person name="Tettelin H."/>
            <person name="Gill S.R."/>
            <person name="White O."/>
            <person name="Salzberg S.L."/>
            <person name="Hoover D.L."/>
            <person name="Lindler L.E."/>
            <person name="Halling S.M."/>
            <person name="Boyle S.M."/>
            <person name="Fraser C.M."/>
        </authorList>
    </citation>
    <scope>NUCLEOTIDE SEQUENCE [LARGE SCALE GENOMIC DNA]</scope>
    <source>
        <strain>1330</strain>
    </source>
</reference>
<reference key="2">
    <citation type="journal article" date="2011" name="J. Bacteriol.">
        <title>Revised genome sequence of Brucella suis 1330.</title>
        <authorList>
            <person name="Tae H."/>
            <person name="Shallom S."/>
            <person name="Settlage R."/>
            <person name="Preston D."/>
            <person name="Adams L.G."/>
            <person name="Garner H.R."/>
        </authorList>
    </citation>
    <scope>NUCLEOTIDE SEQUENCE [LARGE SCALE GENOMIC DNA]</scope>
    <source>
        <strain>1330</strain>
    </source>
</reference>